<evidence type="ECO:0000255" key="1">
    <source>
        <dbReference type="HAMAP-Rule" id="MF_00360"/>
    </source>
</evidence>
<evidence type="ECO:0000256" key="2">
    <source>
        <dbReference type="SAM" id="MobiDB-lite"/>
    </source>
</evidence>
<evidence type="ECO:0000305" key="3"/>
<protein>
    <recommendedName>
        <fullName evidence="1">Small ribosomal subunit protein bS6</fullName>
    </recommendedName>
    <alternativeName>
        <fullName evidence="3">30S ribosomal protein S6</fullName>
    </alternativeName>
</protein>
<gene>
    <name evidence="1" type="primary">rpsF</name>
    <name type="ordered locus">YPN_3283</name>
    <name type="ORF">YP516_3728</name>
</gene>
<dbReference type="EMBL" id="CP000305">
    <property type="protein sequence ID" value="ABG19610.1"/>
    <property type="molecule type" value="Genomic_DNA"/>
</dbReference>
<dbReference type="EMBL" id="ACNQ01000017">
    <property type="protein sequence ID" value="EEO75792.1"/>
    <property type="molecule type" value="Genomic_DNA"/>
</dbReference>
<dbReference type="RefSeq" id="WP_002210153.1">
    <property type="nucleotide sequence ID" value="NZ_ACNQ01000017.1"/>
</dbReference>
<dbReference type="SMR" id="Q1CEH0"/>
<dbReference type="GeneID" id="97457911"/>
<dbReference type="KEGG" id="ypn:YPN_3283"/>
<dbReference type="HOGENOM" id="CLU_113441_6_1_6"/>
<dbReference type="Proteomes" id="UP000008936">
    <property type="component" value="Chromosome"/>
</dbReference>
<dbReference type="GO" id="GO:0022627">
    <property type="term" value="C:cytosolic small ribosomal subunit"/>
    <property type="evidence" value="ECO:0007669"/>
    <property type="project" value="TreeGrafter"/>
</dbReference>
<dbReference type="GO" id="GO:0070181">
    <property type="term" value="F:small ribosomal subunit rRNA binding"/>
    <property type="evidence" value="ECO:0007669"/>
    <property type="project" value="TreeGrafter"/>
</dbReference>
<dbReference type="GO" id="GO:0003735">
    <property type="term" value="F:structural constituent of ribosome"/>
    <property type="evidence" value="ECO:0007669"/>
    <property type="project" value="InterPro"/>
</dbReference>
<dbReference type="GO" id="GO:0006412">
    <property type="term" value="P:translation"/>
    <property type="evidence" value="ECO:0007669"/>
    <property type="project" value="UniProtKB-UniRule"/>
</dbReference>
<dbReference type="CDD" id="cd00473">
    <property type="entry name" value="bS6"/>
    <property type="match status" value="1"/>
</dbReference>
<dbReference type="FunFam" id="3.30.70.60:FF:000003">
    <property type="entry name" value="30S ribosomal protein S6"/>
    <property type="match status" value="1"/>
</dbReference>
<dbReference type="Gene3D" id="3.30.70.60">
    <property type="match status" value="1"/>
</dbReference>
<dbReference type="HAMAP" id="MF_00360">
    <property type="entry name" value="Ribosomal_bS6"/>
    <property type="match status" value="1"/>
</dbReference>
<dbReference type="InterPro" id="IPR000529">
    <property type="entry name" value="Ribosomal_bS6"/>
</dbReference>
<dbReference type="InterPro" id="IPR020815">
    <property type="entry name" value="Ribosomal_bS6_CS"/>
</dbReference>
<dbReference type="InterPro" id="IPR035980">
    <property type="entry name" value="Ribosomal_bS6_sf"/>
</dbReference>
<dbReference type="InterPro" id="IPR020814">
    <property type="entry name" value="Ribosomal_S6_plastid/chlpt"/>
</dbReference>
<dbReference type="InterPro" id="IPR014717">
    <property type="entry name" value="Transl_elong_EF1B/ribsomal_bS6"/>
</dbReference>
<dbReference type="NCBIfam" id="TIGR00166">
    <property type="entry name" value="S6"/>
    <property type="match status" value="1"/>
</dbReference>
<dbReference type="PANTHER" id="PTHR21011">
    <property type="entry name" value="MITOCHONDRIAL 28S RIBOSOMAL PROTEIN S6"/>
    <property type="match status" value="1"/>
</dbReference>
<dbReference type="PANTHER" id="PTHR21011:SF1">
    <property type="entry name" value="SMALL RIBOSOMAL SUBUNIT PROTEIN BS6M"/>
    <property type="match status" value="1"/>
</dbReference>
<dbReference type="Pfam" id="PF01250">
    <property type="entry name" value="Ribosomal_S6"/>
    <property type="match status" value="1"/>
</dbReference>
<dbReference type="SUPFAM" id="SSF54995">
    <property type="entry name" value="Ribosomal protein S6"/>
    <property type="match status" value="1"/>
</dbReference>
<dbReference type="PROSITE" id="PS01048">
    <property type="entry name" value="RIBOSOMAL_S6"/>
    <property type="match status" value="1"/>
</dbReference>
<accession>Q1CEH0</accession>
<accession>C4GXZ2</accession>
<comment type="function">
    <text evidence="1">Binds together with bS18 to 16S ribosomal RNA.</text>
</comment>
<comment type="similarity">
    <text evidence="1">Belongs to the bacterial ribosomal protein bS6 family.</text>
</comment>
<organism>
    <name type="scientific">Yersinia pestis bv. Antiqua (strain Nepal516)</name>
    <dbReference type="NCBI Taxonomy" id="377628"/>
    <lineage>
        <taxon>Bacteria</taxon>
        <taxon>Pseudomonadati</taxon>
        <taxon>Pseudomonadota</taxon>
        <taxon>Gammaproteobacteria</taxon>
        <taxon>Enterobacterales</taxon>
        <taxon>Yersiniaceae</taxon>
        <taxon>Yersinia</taxon>
    </lineage>
</organism>
<reference key="1">
    <citation type="journal article" date="2006" name="J. Bacteriol.">
        <title>Complete genome sequence of Yersinia pestis strains Antiqua and Nepal516: evidence of gene reduction in an emerging pathogen.</title>
        <authorList>
            <person name="Chain P.S.G."/>
            <person name="Hu P."/>
            <person name="Malfatti S.A."/>
            <person name="Radnedge L."/>
            <person name="Larimer F."/>
            <person name="Vergez L.M."/>
            <person name="Worsham P."/>
            <person name="Chu M.C."/>
            <person name="Andersen G.L."/>
        </authorList>
    </citation>
    <scope>NUCLEOTIDE SEQUENCE [LARGE SCALE GENOMIC DNA]</scope>
    <source>
        <strain>Nepal516</strain>
    </source>
</reference>
<reference key="2">
    <citation type="submission" date="2009-04" db="EMBL/GenBank/DDBJ databases">
        <title>Yersinia pestis Nepal516A whole genome shotgun sequencing project.</title>
        <authorList>
            <person name="Plunkett G. III"/>
            <person name="Anderson B.D."/>
            <person name="Baumler D.J."/>
            <person name="Burland V."/>
            <person name="Cabot E.L."/>
            <person name="Glasner J.D."/>
            <person name="Mau B."/>
            <person name="Neeno-Eckwall E."/>
            <person name="Perna N.T."/>
            <person name="Munk A.C."/>
            <person name="Tapia R."/>
            <person name="Green L.D."/>
            <person name="Rogers Y.C."/>
            <person name="Detter J.C."/>
            <person name="Bruce D.C."/>
            <person name="Brettin T.S."/>
        </authorList>
    </citation>
    <scope>NUCLEOTIDE SEQUENCE [LARGE SCALE GENOMIC DNA]</scope>
    <source>
        <strain>Nepal516</strain>
    </source>
</reference>
<sequence length="130" mass="15008">MRHYEIVFMVHPDQSEQVPGMIERYSATITNAAGTIHRLEDWGRRQLAYPINKLHKAHYVLLNVEAPQEAIDELETNFRFNDAVIRSMVMRVKHAVTEASPMVKAKDERRERHDFASEANDDSEAGDSEE</sequence>
<proteinExistence type="inferred from homology"/>
<keyword id="KW-0687">Ribonucleoprotein</keyword>
<keyword id="KW-0689">Ribosomal protein</keyword>
<keyword id="KW-0694">RNA-binding</keyword>
<keyword id="KW-0699">rRNA-binding</keyword>
<name>RS6_YERPN</name>
<feature type="chain" id="PRO_1000005386" description="Small ribosomal subunit protein bS6">
    <location>
        <begin position="1"/>
        <end position="130"/>
    </location>
</feature>
<feature type="region of interest" description="Disordered" evidence="2">
    <location>
        <begin position="99"/>
        <end position="130"/>
    </location>
</feature>
<feature type="compositionally biased region" description="Basic and acidic residues" evidence="2">
    <location>
        <begin position="104"/>
        <end position="116"/>
    </location>
</feature>
<feature type="compositionally biased region" description="Acidic residues" evidence="2">
    <location>
        <begin position="119"/>
        <end position="130"/>
    </location>
</feature>